<feature type="signal peptide" evidence="3">
    <location>
        <begin position="1"/>
        <end position="23"/>
    </location>
</feature>
<feature type="chain" id="PRO_0000034720" description="Toll-like receptor 4">
    <location>
        <begin position="24"/>
        <end position="837"/>
    </location>
</feature>
<feature type="topological domain" description="Extracellular" evidence="3">
    <location>
        <begin position="24"/>
        <end position="629"/>
    </location>
</feature>
<feature type="transmembrane region" description="Helical" evidence="3">
    <location>
        <begin position="630"/>
        <end position="650"/>
    </location>
</feature>
<feature type="topological domain" description="Cytoplasmic" evidence="3">
    <location>
        <begin position="651"/>
        <end position="837"/>
    </location>
</feature>
<feature type="repeat" description="LRR 1">
    <location>
        <begin position="53"/>
        <end position="74"/>
    </location>
</feature>
<feature type="repeat" description="LRR 2">
    <location>
        <begin position="77"/>
        <end position="98"/>
    </location>
</feature>
<feature type="repeat" description="LRR 3">
    <location>
        <begin position="101"/>
        <end position="122"/>
    </location>
</feature>
<feature type="repeat" description="LRR 4">
    <location>
        <begin position="125"/>
        <end position="146"/>
    </location>
</feature>
<feature type="repeat" description="LRR 5">
    <location>
        <begin position="149"/>
        <end position="170"/>
    </location>
</feature>
<feature type="repeat" description="LRR 6">
    <location>
        <begin position="174"/>
        <end position="197"/>
    </location>
</feature>
<feature type="repeat" description="LRR 7">
    <location>
        <begin position="203"/>
        <end position="223"/>
    </location>
</feature>
<feature type="repeat" description="LRR 8">
    <location>
        <begin position="225"/>
        <end position="245"/>
    </location>
</feature>
<feature type="repeat" description="LRR 9">
    <location>
        <begin position="329"/>
        <end position="349"/>
    </location>
</feature>
<feature type="repeat" description="LRR 10">
    <location>
        <begin position="350"/>
        <end position="371"/>
    </location>
</feature>
<feature type="repeat" description="LRR 11">
    <location>
        <begin position="372"/>
        <end position="392"/>
    </location>
</feature>
<feature type="repeat" description="LRR 12">
    <location>
        <begin position="398"/>
        <end position="420"/>
    </location>
</feature>
<feature type="repeat" description="LRR 13">
    <location>
        <begin position="421"/>
        <end position="442"/>
    </location>
</feature>
<feature type="repeat" description="LRR 14">
    <location>
        <begin position="446"/>
        <end position="454"/>
    </location>
</feature>
<feature type="repeat" description="LRR 15">
    <location>
        <begin position="470"/>
        <end position="493"/>
    </location>
</feature>
<feature type="repeat" description="LRR 16">
    <location>
        <begin position="495"/>
        <end position="516"/>
    </location>
</feature>
<feature type="repeat" description="LRR 17">
    <location>
        <begin position="519"/>
        <end position="540"/>
    </location>
</feature>
<feature type="repeat" description="LRR 18">
    <location>
        <begin position="543"/>
        <end position="563"/>
    </location>
</feature>
<feature type="domain" description="LRRCT">
    <location>
        <begin position="577"/>
        <end position="627"/>
    </location>
</feature>
<feature type="domain" description="TIR" evidence="4">
    <location>
        <begin position="670"/>
        <end position="813"/>
    </location>
</feature>
<feature type="glycosylation site" description="N-linked (GlcNAc...) asparagine" evidence="3">
    <location>
        <position position="33"/>
    </location>
</feature>
<feature type="glycosylation site" description="N-linked (GlcNAc...) asparagine" evidence="3">
    <location>
        <position position="171"/>
    </location>
</feature>
<feature type="glycosylation site" description="N-linked (GlcNAc...) asparagine" evidence="3">
    <location>
        <position position="203"/>
    </location>
</feature>
<feature type="glycosylation site" description="N-linked (GlcNAc...) asparagine" evidence="3">
    <location>
        <position position="280"/>
    </location>
</feature>
<feature type="glycosylation site" description="N-linked (GlcNAc...) asparagine" evidence="3">
    <location>
        <position position="307"/>
    </location>
</feature>
<feature type="glycosylation site" description="N-linked (GlcNAc...) asparagine" evidence="3">
    <location>
        <position position="495"/>
    </location>
</feature>
<feature type="glycosylation site" description="N-linked (GlcNAc...) asparagine" evidence="3">
    <location>
        <position position="524"/>
    </location>
</feature>
<feature type="glycosylation site" description="N-linked (GlcNAc...) asparagine" evidence="3">
    <location>
        <position position="573"/>
    </location>
</feature>
<feature type="glycosylation site" description="N-linked (GlcNAc...) asparagine" evidence="3">
    <location>
        <position position="622"/>
    </location>
</feature>
<feature type="glycosylation site" description="N-linked (GlcNAc...) asparagine" evidence="3">
    <location>
        <position position="628"/>
    </location>
</feature>
<feature type="disulfide bond" evidence="1">
    <location>
        <begin position="29"/>
        <end position="38"/>
    </location>
</feature>
<feature type="disulfide bond" evidence="1">
    <location>
        <begin position="279"/>
        <end position="304"/>
    </location>
</feature>
<feature type="disulfide bond" evidence="1">
    <location>
        <begin position="388"/>
        <end position="389"/>
    </location>
</feature>
<feature type="disulfide bond" evidence="1">
    <location>
        <begin position="581"/>
        <end position="607"/>
    </location>
</feature>
<feature type="disulfide bond" evidence="1">
    <location>
        <begin position="583"/>
        <end position="625"/>
    </location>
</feature>
<evidence type="ECO:0000250" key="1">
    <source>
        <dbReference type="UniProtKB" id="O00206"/>
    </source>
</evidence>
<evidence type="ECO:0000250" key="2">
    <source>
        <dbReference type="UniProtKB" id="Q9QUK6"/>
    </source>
</evidence>
<evidence type="ECO:0000255" key="3"/>
<evidence type="ECO:0000255" key="4">
    <source>
        <dbReference type="PROSITE-ProRule" id="PRU00204"/>
    </source>
</evidence>
<evidence type="ECO:0000305" key="5"/>
<gene>
    <name type="primary">TLR4</name>
</gene>
<comment type="function">
    <text evidence="1">Transmembrane receptor that functions as a pattern recognition receptor recognizing pathogen- and damage-associated molecular patterns (PAMPs and DAMPs) to induce innate immune responses via downstream signaling pathways. At the plasma membrane, cooperates with LY96 to mediate the innate immune response to bacterial lipopolysaccharide (LPS). Also involved in LPS-independent inflammatory responses triggered by free fatty acids, such as palmitate, and Ni(2+). Mechanistically, acts via MYD88, TIRAP and TRAF6, leading to NF-kappa-B activation, cytokine secretion and the inflammatory response. Alternatively, CD14-mediated TLR4 internalization via endocytosis is associated with the initiation of a MYD88-independent signaling via the TICAM1-TBK1-IRF3 axis leading to type I interferon production. In addition to the secretion of proinflammatory cytokines, initiates the activation of NLRP3 inflammasome and formation of a positive feedback loop between autophagy and NF-kappa-B signaling cascade. In complex with TLR6, promotes inflammation in monocytes/macrophages by associating with TLR6 and the receptor CD86. Upon ligand binding, such as oxLDL or amyloid-beta 42, the TLR4:TLR6 complex is internalized and triggers inflammatory response, leading to NF-kappa-B-dependent production of CXCL1, CXCL2 and CCL9 cytokines, via MYD88 signaling pathway, and CCL5 cytokine, via TICAM1 signaling pathway. In myeloid dendritic cells, vesicular stomatitis virus glycoprotein G but not LPS promotes the activation of IRF7, leading to type I IFN production in a CD14-dependent manner.</text>
</comment>
<comment type="subunit">
    <text evidence="1 2">Belongs to the lipopolysaccharide (LPS) receptor, a multi-protein complex containing at least CD14, LY96 and TLR4. Binding to bacterial LPS leads to homodimerization. Interacts with LY96 via the extracellular domain. Interacts with MYD88 and TIRAP via their respective TIR domains. Interacts with TICAM2. Interacts with NOX4. Interacts with CNPY3 and HSP90B1; this interaction is required for proper folding in the endoplasmic reticulum. Interacts with MAP3K21; this interaction leads to negative regulation of TLR4 signaling. Interacts with CD36, following CD36 stimulation by oxLDL or amyloid-beta 42, and forms a heterodimer with TLR6. The trimeric complex is internalized and triggers inflammatory response. LYN kinase activity facilitates TLR4-TLR6 heterodimerization and signal initiation. Interacts with TICAM1 in response to LPS in a WDFY1-dependent manner. Interacts with WDFY1 in response to LPS. Interacts with SMPDL3B. Interacts with CEACAM1; upon lipopolysaccharide stimulation, forms a complex including TLR4 and the phosphorylated form of SYK and CEACAM1, which in turn, recruits PTPN6 that dephosphorylates SYK, reducing the production of reactive oxygen species (ROS) and lysosome disruption, which in turn, reduces the activity of the inflammasome. Interacts with RFTN1; the interaction occurs in response to lipopolysaccharide stimulation. Interacts with SCIMP; the interaction occurs in response to lipopolysaccharide stimulation and is enhanced by phosphorylation of SCIMP by LYN (By similarity). This interaction facilitates the phosphorylation of TLR4 by LYN which elicits a selective cytokine response in macrophages (By similarity). Interacts with TRAF3IP3 (By similarity). Interacts with TREM1; this interaction enhances TLR4-mediated inflammatory response (By similarity). Interacts with ZG16B/PAUF (By similarity). Interacts with CD82; this interaction inhibits TLR4-mediated signaling pathway (By similarity).</text>
</comment>
<comment type="subcellular location">
    <subcellularLocation>
        <location evidence="1">Cell membrane</location>
        <topology evidence="1">Single-pass type I membrane protein</topology>
    </subcellularLocation>
    <subcellularLocation>
        <location evidence="1">Early endosome</location>
    </subcellularLocation>
    <subcellularLocation>
        <location evidence="2">Cell projection</location>
        <location evidence="2">Ruffle</location>
    </subcellularLocation>
    <text evidence="1">Upon complex formation with CD36 and TLR6, internalized through dynamin-dependent endocytosis. Colocalizes with RFTN1 at cell membrane and then together with RFTN1 moves to endosomes, upon lipopolysaccharide stimulation.</text>
</comment>
<comment type="domain">
    <text evidence="1">The TIR domain mediates interaction with NOX4.</text>
</comment>
<comment type="PTM">
    <text evidence="2">Phosphorylated on tyrosine residues by LYN after binding lipopolysaccharide.</text>
</comment>
<comment type="PTM">
    <text evidence="1">Ubiquitinated by RNF128 via 'Lys-28'-linked polyubiquitin chains, leading to proteasomal degradation.</text>
</comment>
<comment type="similarity">
    <text evidence="5">Belongs to the Toll-like receptor family.</text>
</comment>
<comment type="caution">
    <text evidence="1 5">In some plant proteins and in human SARM1, the TIR domain has NAD(+) hydrolase (NADase) activity (By similarity). However, despite the presence of the catalytic Asp residue, the isolated TIR domain of human TLR4 lacks NADase activity (By similarity). Based on this, it is unlikely that Toll-like receptors have NADase activity.</text>
</comment>
<sequence length="837" mass="95498">MMSASRLAGTLIPAMAFLSCVRPESWEPCVVPNITYQCMELNFYKIPDNLPFSTKNLDLSFNPLRHLGSYSFFSFPELQVLDLSRCEIQTIEDGAYQSLSHLSTLILTGNPIQSLALGAFSGLSSLQKLVAVETNLASLENFPIGHLKTLKELNVAHNLIQSFKLPEYFSNLTNLEYLDLSSNKIQSIYCTDLRVLHQMPLLNLSLDLSLNPMTFIQPGAFKEIRLHKLTLRNNFDSLNVMKTCIQGLAGLEVRRLVLGEFRNEGNLEKFDKSALEGLCNLTIEEFRLAYLDYYLDDIIDLFNCLTNVSSFSLVSVTIERVKDFSYNFGWQHLELVNCKFGQFPTLKLKSLKRLTFTSNKGGNAFSEVDLPSLEFLDLSRNGLSFKGCCSQSDFGTTSLKYLDLSFNGVITMSSNFLGLEQLEHLDFQHSNLKQMSEFSVFLSLRNLIYLDISHTHTRVAFNGIFNGLSSLEVLKMAGNSFQENFLPDIFTELRNLTFLDLSQCQLEQLSPTAFNSLSSLQVLNMSHNNFFSLDTFPYKCLNSLRVLDYSLNHIMTSKKQELQHFPSSLAFLNLTQNDFACTCEHQSFLQWIKDQRQLLVEVERMECATPSDKQGMPVLSLNITCQMNKTIIGVSVLSVLVVSVVAVLVYKFYFHLMLLAGCIKYGRGENVYDAFVIYSSQDEDWVRNELVKNLEEGVPPFQLCLHYRDFIPGVAIAANIIHEGFHKSRKVIVVVSQHFIQSRWCIFEYEIAQTWQFLSSRAGIIFIVLQKVEKTLLRQQVELYRLLSRNTYLEWEDSVLGRHIFWRRLRKALLDGKSWNPEGTVGTGCNWQEATSI</sequence>
<reference key="1">
    <citation type="journal article" date="2001" name="Genetics">
        <title>Excess of rare amino acid polymorphisms in the Toll-like receptor 4 in humans.</title>
        <authorList>
            <person name="Smirnova I."/>
            <person name="Hamblin M.T."/>
            <person name="McBride C."/>
            <person name="Beutler B."/>
            <person name="Di Rienzo A."/>
        </authorList>
    </citation>
    <scope>NUCLEOTIDE SEQUENCE [GENOMIC DNA]</scope>
</reference>
<accession>Q8SPE8</accession>
<keyword id="KW-1003">Cell membrane</keyword>
<keyword id="KW-0966">Cell projection</keyword>
<keyword id="KW-1015">Disulfide bond</keyword>
<keyword id="KW-0967">Endosome</keyword>
<keyword id="KW-0325">Glycoprotein</keyword>
<keyword id="KW-0391">Immunity</keyword>
<keyword id="KW-0395">Inflammatory response</keyword>
<keyword id="KW-0399">Innate immunity</keyword>
<keyword id="KW-0433">Leucine-rich repeat</keyword>
<keyword id="KW-0472">Membrane</keyword>
<keyword id="KW-0520">NAD</keyword>
<keyword id="KW-0675">Receptor</keyword>
<keyword id="KW-1185">Reference proteome</keyword>
<keyword id="KW-0677">Repeat</keyword>
<keyword id="KW-0732">Signal</keyword>
<keyword id="KW-0812">Transmembrane</keyword>
<keyword id="KW-1133">Transmembrane helix</keyword>
<keyword id="KW-0832">Ubl conjugation</keyword>
<organism>
    <name type="scientific">Gorilla gorilla gorilla</name>
    <name type="common">Western lowland gorilla</name>
    <dbReference type="NCBI Taxonomy" id="9595"/>
    <lineage>
        <taxon>Eukaryota</taxon>
        <taxon>Metazoa</taxon>
        <taxon>Chordata</taxon>
        <taxon>Craniata</taxon>
        <taxon>Vertebrata</taxon>
        <taxon>Euteleostomi</taxon>
        <taxon>Mammalia</taxon>
        <taxon>Eutheria</taxon>
        <taxon>Euarchontoglires</taxon>
        <taxon>Primates</taxon>
        <taxon>Haplorrhini</taxon>
        <taxon>Catarrhini</taxon>
        <taxon>Hominidae</taxon>
        <taxon>Gorilla</taxon>
    </lineage>
</organism>
<name>TLR4_GORGO</name>
<proteinExistence type="inferred from homology"/>
<dbReference type="EMBL" id="AF497565">
    <property type="protein sequence ID" value="AAM18617.1"/>
    <property type="molecule type" value="Genomic_DNA"/>
</dbReference>
<dbReference type="EMBL" id="AF497563">
    <property type="protein sequence ID" value="AAM18617.1"/>
    <property type="status" value="JOINED"/>
    <property type="molecule type" value="Genomic_DNA"/>
</dbReference>
<dbReference type="EMBL" id="AF497564">
    <property type="protein sequence ID" value="AAM18617.1"/>
    <property type="status" value="JOINED"/>
    <property type="molecule type" value="Genomic_DNA"/>
</dbReference>
<dbReference type="SMR" id="Q8SPE8"/>
<dbReference type="STRING" id="9593.ENSGGOP00000020706"/>
<dbReference type="GlyCosmos" id="Q8SPE8">
    <property type="glycosylation" value="10 sites, No reported glycans"/>
</dbReference>
<dbReference type="eggNOG" id="KOG4641">
    <property type="taxonomic scope" value="Eukaryota"/>
</dbReference>
<dbReference type="HOGENOM" id="CLU_006000_5_0_1"/>
<dbReference type="InParanoid" id="Q8SPE8"/>
<dbReference type="Proteomes" id="UP000001519">
    <property type="component" value="Unplaced"/>
</dbReference>
<dbReference type="GO" id="GO:0005769">
    <property type="term" value="C:early endosome"/>
    <property type="evidence" value="ECO:0007669"/>
    <property type="project" value="UniProtKB-SubCell"/>
</dbReference>
<dbReference type="GO" id="GO:0046696">
    <property type="term" value="C:lipopolysaccharide receptor complex"/>
    <property type="evidence" value="ECO:0000250"/>
    <property type="project" value="UniProtKB"/>
</dbReference>
<dbReference type="GO" id="GO:0005886">
    <property type="term" value="C:plasma membrane"/>
    <property type="evidence" value="ECO:0000250"/>
    <property type="project" value="UniProtKB"/>
</dbReference>
<dbReference type="GO" id="GO:0001726">
    <property type="term" value="C:ruffle"/>
    <property type="evidence" value="ECO:0007669"/>
    <property type="project" value="UniProtKB-SubCell"/>
</dbReference>
<dbReference type="GO" id="GO:0001530">
    <property type="term" value="F:lipopolysaccharide binding"/>
    <property type="evidence" value="ECO:0000318"/>
    <property type="project" value="GO_Central"/>
</dbReference>
<dbReference type="GO" id="GO:0001875">
    <property type="term" value="F:lipopolysaccharide immune receptor activity"/>
    <property type="evidence" value="ECO:0000250"/>
    <property type="project" value="UniProtKB"/>
</dbReference>
<dbReference type="GO" id="GO:0061809">
    <property type="term" value="F:NAD+ nucleosidase activity, cyclic ADP-ribose generating"/>
    <property type="evidence" value="ECO:0007669"/>
    <property type="project" value="UniProtKB-EC"/>
</dbReference>
<dbReference type="GO" id="GO:0004888">
    <property type="term" value="F:transmembrane signaling receptor activity"/>
    <property type="evidence" value="ECO:0007669"/>
    <property type="project" value="InterPro"/>
</dbReference>
<dbReference type="GO" id="GO:0050829">
    <property type="term" value="P:defense response to Gram-negative bacterium"/>
    <property type="evidence" value="ECO:0000318"/>
    <property type="project" value="GO_Central"/>
</dbReference>
<dbReference type="GO" id="GO:0032497">
    <property type="term" value="P:detection of lipopolysaccharide"/>
    <property type="evidence" value="ECO:0000250"/>
    <property type="project" value="UniProtKB"/>
</dbReference>
<dbReference type="GO" id="GO:0006954">
    <property type="term" value="P:inflammatory response"/>
    <property type="evidence" value="ECO:0000318"/>
    <property type="project" value="GO_Central"/>
</dbReference>
<dbReference type="GO" id="GO:0045087">
    <property type="term" value="P:innate immune response"/>
    <property type="evidence" value="ECO:0007669"/>
    <property type="project" value="UniProtKB-KW"/>
</dbReference>
<dbReference type="GO" id="GO:0042116">
    <property type="term" value="P:macrophage activation"/>
    <property type="evidence" value="ECO:0000250"/>
    <property type="project" value="UniProtKB"/>
</dbReference>
<dbReference type="GO" id="GO:0002755">
    <property type="term" value="P:MyD88-dependent toll-like receptor signaling pathway"/>
    <property type="evidence" value="ECO:0000318"/>
    <property type="project" value="GO_Central"/>
</dbReference>
<dbReference type="GO" id="GO:0032731">
    <property type="term" value="P:positive regulation of interleukin-1 beta production"/>
    <property type="evidence" value="ECO:0000250"/>
    <property type="project" value="UniProtKB"/>
</dbReference>
<dbReference type="GO" id="GO:1900227">
    <property type="term" value="P:positive regulation of NLRP3 inflammasome complex assembly"/>
    <property type="evidence" value="ECO:0000250"/>
    <property type="project" value="UniProtKB"/>
</dbReference>
<dbReference type="GO" id="GO:0034142">
    <property type="term" value="P:toll-like receptor 4 signaling pathway"/>
    <property type="evidence" value="ECO:0000318"/>
    <property type="project" value="GO_Central"/>
</dbReference>
<dbReference type="FunFam" id="3.40.50.10140:FF:000006">
    <property type="entry name" value="Toll-like receptor 4"/>
    <property type="match status" value="1"/>
</dbReference>
<dbReference type="FunFam" id="3.80.10.10:FF:000195">
    <property type="entry name" value="Toll-like receptor 4"/>
    <property type="match status" value="1"/>
</dbReference>
<dbReference type="Gene3D" id="3.80.10.10">
    <property type="entry name" value="Ribonuclease Inhibitor"/>
    <property type="match status" value="1"/>
</dbReference>
<dbReference type="Gene3D" id="3.40.50.10140">
    <property type="entry name" value="Toll/interleukin-1 receptor homology (TIR) domain"/>
    <property type="match status" value="1"/>
</dbReference>
<dbReference type="InterPro" id="IPR000483">
    <property type="entry name" value="Cys-rich_flank_reg_C"/>
</dbReference>
<dbReference type="InterPro" id="IPR001611">
    <property type="entry name" value="Leu-rich_rpt"/>
</dbReference>
<dbReference type="InterPro" id="IPR025875">
    <property type="entry name" value="Leu-rich_rpt_4"/>
</dbReference>
<dbReference type="InterPro" id="IPR003591">
    <property type="entry name" value="Leu-rich_rpt_typical-subtyp"/>
</dbReference>
<dbReference type="InterPro" id="IPR032675">
    <property type="entry name" value="LRR_dom_sf"/>
</dbReference>
<dbReference type="InterPro" id="IPR000157">
    <property type="entry name" value="TIR_dom"/>
</dbReference>
<dbReference type="InterPro" id="IPR017241">
    <property type="entry name" value="Toll-like_receptor"/>
</dbReference>
<dbReference type="InterPro" id="IPR035897">
    <property type="entry name" value="Toll_tir_struct_dom_sf"/>
</dbReference>
<dbReference type="PANTHER" id="PTHR24365">
    <property type="entry name" value="TOLL-LIKE RECEPTOR"/>
    <property type="match status" value="1"/>
</dbReference>
<dbReference type="PANTHER" id="PTHR24365:SF521">
    <property type="entry name" value="TOLL-LIKE RECEPTOR 4"/>
    <property type="match status" value="1"/>
</dbReference>
<dbReference type="Pfam" id="PF12799">
    <property type="entry name" value="LRR_4"/>
    <property type="match status" value="1"/>
</dbReference>
<dbReference type="Pfam" id="PF13516">
    <property type="entry name" value="LRR_6"/>
    <property type="match status" value="1"/>
</dbReference>
<dbReference type="Pfam" id="PF13855">
    <property type="entry name" value="LRR_8"/>
    <property type="match status" value="2"/>
</dbReference>
<dbReference type="Pfam" id="PF01582">
    <property type="entry name" value="TIR"/>
    <property type="match status" value="1"/>
</dbReference>
<dbReference type="PIRSF" id="PIRSF037595">
    <property type="entry name" value="Toll-like_receptor"/>
    <property type="match status" value="1"/>
</dbReference>
<dbReference type="PRINTS" id="PR00019">
    <property type="entry name" value="LEURICHRPT"/>
</dbReference>
<dbReference type="SMART" id="SM00365">
    <property type="entry name" value="LRR_SD22"/>
    <property type="match status" value="5"/>
</dbReference>
<dbReference type="SMART" id="SM00369">
    <property type="entry name" value="LRR_TYP"/>
    <property type="match status" value="11"/>
</dbReference>
<dbReference type="SMART" id="SM00082">
    <property type="entry name" value="LRRCT"/>
    <property type="match status" value="1"/>
</dbReference>
<dbReference type="SMART" id="SM00255">
    <property type="entry name" value="TIR"/>
    <property type="match status" value="1"/>
</dbReference>
<dbReference type="SUPFAM" id="SSF52058">
    <property type="entry name" value="L domain-like"/>
    <property type="match status" value="2"/>
</dbReference>
<dbReference type="SUPFAM" id="SSF52200">
    <property type="entry name" value="Toll/Interleukin receptor TIR domain"/>
    <property type="match status" value="1"/>
</dbReference>
<dbReference type="PROSITE" id="PS51450">
    <property type="entry name" value="LRR"/>
    <property type="match status" value="12"/>
</dbReference>
<dbReference type="PROSITE" id="PS50104">
    <property type="entry name" value="TIR"/>
    <property type="match status" value="1"/>
</dbReference>
<protein>
    <recommendedName>
        <fullName>Toll-like receptor 4</fullName>
    </recommendedName>
    <cdAntigenName>CD284</cdAntigenName>
</protein>